<comment type="function">
    <text evidence="1">Binds the lower part of the 30S subunit head. Binds mRNA in the 70S ribosome, positioning it for translation.</text>
</comment>
<comment type="subunit">
    <text evidence="1">Part of the 30S ribosomal subunit. Forms a tight complex with proteins S10 and S14.</text>
</comment>
<comment type="similarity">
    <text evidence="1">Belongs to the universal ribosomal protein uS3 family.</text>
</comment>
<accession>B3R7R7</accession>
<protein>
    <recommendedName>
        <fullName evidence="1">Small ribosomal subunit protein uS3</fullName>
    </recommendedName>
    <alternativeName>
        <fullName evidence="3">30S ribosomal protein S3</fullName>
    </alternativeName>
</protein>
<feature type="chain" id="PRO_1000140951" description="Small ribosomal subunit protein uS3">
    <location>
        <begin position="1"/>
        <end position="265"/>
    </location>
</feature>
<feature type="domain" description="KH type-2" evidence="1">
    <location>
        <begin position="39"/>
        <end position="107"/>
    </location>
</feature>
<feature type="region of interest" description="Disordered" evidence="2">
    <location>
        <begin position="211"/>
        <end position="265"/>
    </location>
</feature>
<feature type="compositionally biased region" description="Basic and acidic residues" evidence="2">
    <location>
        <begin position="221"/>
        <end position="239"/>
    </location>
</feature>
<feature type="compositionally biased region" description="Gly residues" evidence="2">
    <location>
        <begin position="240"/>
        <end position="251"/>
    </location>
</feature>
<organism>
    <name type="scientific">Cupriavidus taiwanensis (strain DSM 17343 / BCRC 17206 / CCUG 44338 / CIP 107171 / LMG 19424 / R1)</name>
    <name type="common">Ralstonia taiwanensis (strain LMG 19424)</name>
    <dbReference type="NCBI Taxonomy" id="977880"/>
    <lineage>
        <taxon>Bacteria</taxon>
        <taxon>Pseudomonadati</taxon>
        <taxon>Pseudomonadota</taxon>
        <taxon>Betaproteobacteria</taxon>
        <taxon>Burkholderiales</taxon>
        <taxon>Burkholderiaceae</taxon>
        <taxon>Cupriavidus</taxon>
    </lineage>
</organism>
<keyword id="KW-0687">Ribonucleoprotein</keyword>
<keyword id="KW-0689">Ribosomal protein</keyword>
<keyword id="KW-0694">RNA-binding</keyword>
<keyword id="KW-0699">rRNA-binding</keyword>
<gene>
    <name evidence="1" type="primary">rpsC</name>
    <name type="ordered locus">RALTA_A2938</name>
</gene>
<name>RS3_CUPTR</name>
<sequence length="265" mass="29805">MGQKIHPTGFRLAVSRNWASRWYASNTKFAGMLKEDIEVRDFLKKKLKNASVGRVVIERPARNARITIYSSRPGVVIGKKGEDIELLKAELQRRMGVPVHVNIEEIRKPETDAQLIADSITQQLERRIMFRRAMKRAMQNAMRLGAQGIKIMSAGRLNGIEIARTEWYREGRVPLHTLRADIDYGFSEAETTYGIIGVKVWVYKGDHLGRNDAPVVEEPQDDRRRRPGRPEGRRREGEGRPGGNRRGGAGAGRRAAPGADAKSGE</sequence>
<evidence type="ECO:0000255" key="1">
    <source>
        <dbReference type="HAMAP-Rule" id="MF_01309"/>
    </source>
</evidence>
<evidence type="ECO:0000256" key="2">
    <source>
        <dbReference type="SAM" id="MobiDB-lite"/>
    </source>
</evidence>
<evidence type="ECO:0000305" key="3"/>
<reference key="1">
    <citation type="journal article" date="2008" name="Genome Res.">
        <title>Genome sequence of the beta-rhizobium Cupriavidus taiwanensis and comparative genomics of rhizobia.</title>
        <authorList>
            <person name="Amadou C."/>
            <person name="Pascal G."/>
            <person name="Mangenot S."/>
            <person name="Glew M."/>
            <person name="Bontemps C."/>
            <person name="Capela D."/>
            <person name="Carrere S."/>
            <person name="Cruveiller S."/>
            <person name="Dossat C."/>
            <person name="Lajus A."/>
            <person name="Marchetti M."/>
            <person name="Poinsot V."/>
            <person name="Rouy Z."/>
            <person name="Servin B."/>
            <person name="Saad M."/>
            <person name="Schenowitz C."/>
            <person name="Barbe V."/>
            <person name="Batut J."/>
            <person name="Medigue C."/>
            <person name="Masson-Boivin C."/>
        </authorList>
    </citation>
    <scope>NUCLEOTIDE SEQUENCE [LARGE SCALE GENOMIC DNA]</scope>
    <source>
        <strain>DSM 17343 / BCRC 17206 / CCUG 44338 / CIP 107171 / LMG 19424 / R1</strain>
    </source>
</reference>
<proteinExistence type="inferred from homology"/>
<dbReference type="EMBL" id="CU633749">
    <property type="protein sequence ID" value="CAQ70862.1"/>
    <property type="molecule type" value="Genomic_DNA"/>
</dbReference>
<dbReference type="RefSeq" id="WP_010812392.1">
    <property type="nucleotide sequence ID" value="NC_010528.1"/>
</dbReference>
<dbReference type="SMR" id="B3R7R7"/>
<dbReference type="GeneID" id="29761076"/>
<dbReference type="KEGG" id="cti:RALTA_A2938"/>
<dbReference type="eggNOG" id="COG0092">
    <property type="taxonomic scope" value="Bacteria"/>
</dbReference>
<dbReference type="HOGENOM" id="CLU_058591_0_2_4"/>
<dbReference type="BioCyc" id="CTAI977880:RALTA_RS14325-MONOMER"/>
<dbReference type="Proteomes" id="UP000001692">
    <property type="component" value="Chromosome 1"/>
</dbReference>
<dbReference type="GO" id="GO:0022627">
    <property type="term" value="C:cytosolic small ribosomal subunit"/>
    <property type="evidence" value="ECO:0007669"/>
    <property type="project" value="TreeGrafter"/>
</dbReference>
<dbReference type="GO" id="GO:0003729">
    <property type="term" value="F:mRNA binding"/>
    <property type="evidence" value="ECO:0007669"/>
    <property type="project" value="UniProtKB-UniRule"/>
</dbReference>
<dbReference type="GO" id="GO:0019843">
    <property type="term" value="F:rRNA binding"/>
    <property type="evidence" value="ECO:0007669"/>
    <property type="project" value="UniProtKB-UniRule"/>
</dbReference>
<dbReference type="GO" id="GO:0003735">
    <property type="term" value="F:structural constituent of ribosome"/>
    <property type="evidence" value="ECO:0007669"/>
    <property type="project" value="InterPro"/>
</dbReference>
<dbReference type="GO" id="GO:0006412">
    <property type="term" value="P:translation"/>
    <property type="evidence" value="ECO:0007669"/>
    <property type="project" value="UniProtKB-UniRule"/>
</dbReference>
<dbReference type="CDD" id="cd02412">
    <property type="entry name" value="KH-II_30S_S3"/>
    <property type="match status" value="1"/>
</dbReference>
<dbReference type="FunFam" id="3.30.1140.32:FF:000006">
    <property type="entry name" value="30S ribosomal protein S3"/>
    <property type="match status" value="1"/>
</dbReference>
<dbReference type="FunFam" id="3.30.300.20:FF:000001">
    <property type="entry name" value="30S ribosomal protein S3"/>
    <property type="match status" value="1"/>
</dbReference>
<dbReference type="Gene3D" id="3.30.300.20">
    <property type="match status" value="1"/>
</dbReference>
<dbReference type="Gene3D" id="3.30.1140.32">
    <property type="entry name" value="Ribosomal protein S3, C-terminal domain"/>
    <property type="match status" value="1"/>
</dbReference>
<dbReference type="HAMAP" id="MF_01309_B">
    <property type="entry name" value="Ribosomal_uS3_B"/>
    <property type="match status" value="1"/>
</dbReference>
<dbReference type="InterPro" id="IPR004087">
    <property type="entry name" value="KH_dom"/>
</dbReference>
<dbReference type="InterPro" id="IPR015946">
    <property type="entry name" value="KH_dom-like_a/b"/>
</dbReference>
<dbReference type="InterPro" id="IPR004044">
    <property type="entry name" value="KH_dom_type_2"/>
</dbReference>
<dbReference type="InterPro" id="IPR009019">
    <property type="entry name" value="KH_sf_prok-type"/>
</dbReference>
<dbReference type="InterPro" id="IPR036419">
    <property type="entry name" value="Ribosomal_S3_C_sf"/>
</dbReference>
<dbReference type="InterPro" id="IPR005704">
    <property type="entry name" value="Ribosomal_uS3_bac-typ"/>
</dbReference>
<dbReference type="InterPro" id="IPR001351">
    <property type="entry name" value="Ribosomal_uS3_C"/>
</dbReference>
<dbReference type="InterPro" id="IPR018280">
    <property type="entry name" value="Ribosomal_uS3_CS"/>
</dbReference>
<dbReference type="NCBIfam" id="TIGR01009">
    <property type="entry name" value="rpsC_bact"/>
    <property type="match status" value="1"/>
</dbReference>
<dbReference type="PANTHER" id="PTHR11760">
    <property type="entry name" value="30S/40S RIBOSOMAL PROTEIN S3"/>
    <property type="match status" value="1"/>
</dbReference>
<dbReference type="PANTHER" id="PTHR11760:SF19">
    <property type="entry name" value="SMALL RIBOSOMAL SUBUNIT PROTEIN US3C"/>
    <property type="match status" value="1"/>
</dbReference>
<dbReference type="Pfam" id="PF07650">
    <property type="entry name" value="KH_2"/>
    <property type="match status" value="1"/>
</dbReference>
<dbReference type="Pfam" id="PF00189">
    <property type="entry name" value="Ribosomal_S3_C"/>
    <property type="match status" value="1"/>
</dbReference>
<dbReference type="SMART" id="SM00322">
    <property type="entry name" value="KH"/>
    <property type="match status" value="1"/>
</dbReference>
<dbReference type="SUPFAM" id="SSF54814">
    <property type="entry name" value="Prokaryotic type KH domain (KH-domain type II)"/>
    <property type="match status" value="1"/>
</dbReference>
<dbReference type="SUPFAM" id="SSF54821">
    <property type="entry name" value="Ribosomal protein S3 C-terminal domain"/>
    <property type="match status" value="1"/>
</dbReference>
<dbReference type="PROSITE" id="PS50823">
    <property type="entry name" value="KH_TYPE_2"/>
    <property type="match status" value="1"/>
</dbReference>
<dbReference type="PROSITE" id="PS00548">
    <property type="entry name" value="RIBOSOMAL_S3"/>
    <property type="match status" value="1"/>
</dbReference>